<proteinExistence type="evidence at transcript level"/>
<dbReference type="EMBL" id="AB076183">
    <property type="protein sequence ID" value="BAD06452.1"/>
    <property type="molecule type" value="mRNA"/>
</dbReference>
<dbReference type="EMBL" id="U64689">
    <property type="protein sequence ID" value="AAB40631.1"/>
    <property type="molecule type" value="mRNA"/>
</dbReference>
<dbReference type="EMBL" id="AF120109">
    <property type="protein sequence ID" value="AAF87266.1"/>
    <property type="molecule type" value="mRNA"/>
</dbReference>
<dbReference type="EMBL" id="AF120110">
    <property type="protein sequence ID" value="AAF87267.1"/>
    <property type="molecule type" value="mRNA"/>
</dbReference>
<dbReference type="RefSeq" id="NP_446052.2">
    <property type="nucleotide sequence ID" value="NM_053600.2"/>
</dbReference>
<dbReference type="SMR" id="P97578"/>
<dbReference type="FunCoup" id="P97578">
    <property type="interactions" value="1954"/>
</dbReference>
<dbReference type="STRING" id="10116.ENSRNOP00000049923"/>
<dbReference type="PhosphoSitePlus" id="P97578"/>
<dbReference type="PaxDb" id="10116-ENSRNOP00000049923"/>
<dbReference type="GeneID" id="94269"/>
<dbReference type="KEGG" id="rno:94269"/>
<dbReference type="UCSC" id="RGD:619709">
    <molecule id="P97578-1"/>
    <property type="organism name" value="rat"/>
</dbReference>
<dbReference type="AGR" id="RGD:619709"/>
<dbReference type="CTD" id="9637"/>
<dbReference type="RGD" id="619709">
    <property type="gene designation" value="Fez2"/>
</dbReference>
<dbReference type="eggNOG" id="KOG3919">
    <property type="taxonomic scope" value="Eukaryota"/>
</dbReference>
<dbReference type="InParanoid" id="P97578"/>
<dbReference type="PhylomeDB" id="P97578"/>
<dbReference type="PRO" id="PR:P97578"/>
<dbReference type="Proteomes" id="UP000002494">
    <property type="component" value="Unplaced"/>
</dbReference>
<dbReference type="GO" id="GO:0030424">
    <property type="term" value="C:axon"/>
    <property type="evidence" value="ECO:0000318"/>
    <property type="project" value="GO_Central"/>
</dbReference>
<dbReference type="GO" id="GO:0005737">
    <property type="term" value="C:cytoplasm"/>
    <property type="evidence" value="ECO:0000318"/>
    <property type="project" value="GO_Central"/>
</dbReference>
<dbReference type="GO" id="GO:1902902">
    <property type="term" value="P:negative regulation of autophagosome assembly"/>
    <property type="evidence" value="ECO:0000250"/>
    <property type="project" value="GO_Central"/>
</dbReference>
<dbReference type="GO" id="GO:0017157">
    <property type="term" value="P:regulation of exocytosis"/>
    <property type="evidence" value="ECO:0000304"/>
    <property type="project" value="RGD"/>
</dbReference>
<dbReference type="InterPro" id="IPR011680">
    <property type="entry name" value="FEZ"/>
</dbReference>
<dbReference type="PANTHER" id="PTHR12394:SF11">
    <property type="entry name" value="FASCICULATION AND ELONGATION PROTEIN ZETA-2"/>
    <property type="match status" value="1"/>
</dbReference>
<dbReference type="PANTHER" id="PTHR12394">
    <property type="entry name" value="ZYGIN"/>
    <property type="match status" value="1"/>
</dbReference>
<dbReference type="Pfam" id="PF07763">
    <property type="entry name" value="FEZ"/>
    <property type="match status" value="1"/>
</dbReference>
<sequence>MAADGDWQDFYEFQEPAGSVRDQENCNASPEAGAGAHAGGDSFPALASSLEEKLSLCFRPTSDADPPRAAVRPITERSLLQGDEIWNALTDNYGNVMPVDWKSSHTRTLHLLTLNLTEKGMSDGLPFDTSDEEELREQLDMHSIIVSCVNEEPLFTADQVIEEIEEMMQESPDLEDDETPTQSDRLSMLSQEIQTLKSSSMSSCEERVKRLSVSELNELLEEIETAIKEYSEELVQQLALRDELEFEKEVENSFISALIEVQNKQKEHKETAKKKKKLKNGSSQNGRNERSHMPGTRFSMEGISNVIQNGLRHTFGNSGGEKQYLTTVIPYEKKNGPPSVEDLQILTKILHAMKEDSEKVPSLLTDYILKVLCPT</sequence>
<organism>
    <name type="scientific">Rattus norvegicus</name>
    <name type="common">Rat</name>
    <dbReference type="NCBI Taxonomy" id="10116"/>
    <lineage>
        <taxon>Eukaryota</taxon>
        <taxon>Metazoa</taxon>
        <taxon>Chordata</taxon>
        <taxon>Craniata</taxon>
        <taxon>Vertebrata</taxon>
        <taxon>Euteleostomi</taxon>
        <taxon>Mammalia</taxon>
        <taxon>Eutheria</taxon>
        <taxon>Euarchontoglires</taxon>
        <taxon>Glires</taxon>
        <taxon>Rodentia</taxon>
        <taxon>Myomorpha</taxon>
        <taxon>Muroidea</taxon>
        <taxon>Muridae</taxon>
        <taxon>Murinae</taxon>
        <taxon>Rattus</taxon>
    </lineage>
</organism>
<evidence type="ECO:0000250" key="1"/>
<evidence type="ECO:0000250" key="2">
    <source>
        <dbReference type="UniProtKB" id="Q9UHY8"/>
    </source>
</evidence>
<evidence type="ECO:0000255" key="3"/>
<evidence type="ECO:0000256" key="4">
    <source>
        <dbReference type="SAM" id="MobiDB-lite"/>
    </source>
</evidence>
<evidence type="ECO:0000303" key="5">
    <source ref="3"/>
</evidence>
<evidence type="ECO:0000305" key="6"/>
<name>FEZ2_RAT</name>
<accession>P97578</accession>
<accession>Q76LN1</accession>
<accession>Q9JJ35</accession>
<accession>Q9JJ36</accession>
<keyword id="KW-0025">Alternative splicing</keyword>
<keyword id="KW-0175">Coiled coil</keyword>
<keyword id="KW-1015">Disulfide bond</keyword>
<keyword id="KW-0597">Phosphoprotein</keyword>
<keyword id="KW-1185">Reference proteome</keyword>
<reference key="1">
    <citation type="journal article" date="2004" name="Biochem. Biophys. Res. Commun.">
        <title>Identification of a tissue-non-specific homologue of axonal fasciculation and elongation protein zeta-1.</title>
        <authorList>
            <person name="Fujita T."/>
            <person name="Ikuta J."/>
            <person name="Hamada J."/>
            <person name="Okajima T."/>
            <person name="Tatematsu K."/>
            <person name="Tanizawa K."/>
            <person name="Kuroda S."/>
        </authorList>
    </citation>
    <scope>NUCLEOTIDE SEQUENCE [MRNA] (ISOFORM 1)</scope>
</reference>
<reference key="2">
    <citation type="submission" date="1996-07" db="EMBL/GenBank/DDBJ databases">
        <title>Zigins: a family of synaptotagmin-interacting proteins related to unc-76.</title>
        <authorList>
            <person name="Sugita S."/>
            <person name="von Poser C."/>
            <person name="Rosahl T.W."/>
            <person name="Hata Y."/>
            <person name="Suedhof T.C."/>
        </authorList>
    </citation>
    <scope>NUCLEOTIDE SEQUENCE [MRNA] OF 52-375 (ISOFORM 1)</scope>
</reference>
<reference key="3">
    <citation type="submission" date="1999-01" db="EMBL/GenBank/DDBJ databases">
        <title>Effective generation of viral/cell fusion transcripts by poly-A signal sequence mutant retroviruses: evidence for increased tumorigenicity by infected rat fibroblasts.</title>
        <authorList>
            <person name="Zhang Q.Y."/>
            <person name="Blair D.G."/>
        </authorList>
    </citation>
    <scope>NUCLEOTIDE SEQUENCE [MRNA] OF 297-375 (ISOFORMS 1 AND 2)</scope>
    <source>
        <strain>Fischer</strain>
        <tissue>Fibroblast</tissue>
    </source>
</reference>
<protein>
    <recommendedName>
        <fullName>Fasciculation and elongation protein zeta-2</fullName>
    </recommendedName>
    <alternativeName>
        <fullName>Zygin II</fullName>
    </alternativeName>
    <alternativeName>
        <fullName>Zygin-2</fullName>
    </alternativeName>
    <alternativeName>
        <fullName>Zygin-related protein types I/II</fullName>
    </alternativeName>
</protein>
<feature type="chain" id="PRO_0000189530" description="Fasciculation and elongation protein zeta-2">
    <location>
        <begin position="1"/>
        <end position="375"/>
    </location>
</feature>
<feature type="region of interest" description="Disordered" evidence="4">
    <location>
        <begin position="1"/>
        <end position="42"/>
    </location>
</feature>
<feature type="region of interest" description="Disordered" evidence="4">
    <location>
        <begin position="265"/>
        <end position="297"/>
    </location>
</feature>
<feature type="coiled-coil region" evidence="3">
    <location>
        <begin position="156"/>
        <end position="177"/>
    </location>
</feature>
<feature type="coiled-coil region" evidence="3">
    <location>
        <begin position="206"/>
        <end position="281"/>
    </location>
</feature>
<feature type="modified residue" description="Phosphoserine" evidence="2">
    <location>
        <position position="130"/>
    </location>
</feature>
<feature type="modified residue" description="Phosphoserine" evidence="2">
    <location>
        <position position="171"/>
    </location>
</feature>
<feature type="modified residue" description="Phosphoserine" evidence="2">
    <location>
        <position position="190"/>
    </location>
</feature>
<feature type="disulfide bond" description="Interchain" evidence="1">
    <location>
        <position position="148"/>
    </location>
</feature>
<feature type="splice variant" id="VSP_015758" description="In isoform 2." evidence="5">
    <location>
        <begin position="297"/>
        <end position="323"/>
    </location>
</feature>
<gene>
    <name type="primary">Fez2</name>
    <name type="synonym">Zrp</name>
</gene>
<comment type="function">
    <text evidence="1">Involved in axonal outgrowth and fasciculation.</text>
</comment>
<comment type="subunit">
    <text evidence="1">Homodimer; disulfide-linked. May form heterodimers with FEZ1. Interacts with synaptotagmin (By similarity).</text>
</comment>
<comment type="alternative products">
    <event type="alternative splicing"/>
    <isoform>
        <id>P97578-1</id>
        <name>1</name>
        <name>Zrp1</name>
        <sequence type="displayed"/>
    </isoform>
    <isoform>
        <id>P97578-2</id>
        <name>2</name>
        <name>Zrp2</name>
        <sequence type="described" ref="VSP_015758"/>
    </isoform>
</comment>
<comment type="similarity">
    <text evidence="6">Belongs to the zygin family.</text>
</comment>